<dbReference type="EMBL" id="AF157835">
    <property type="protein sequence ID" value="AAF03951.1"/>
    <property type="molecule type" value="Genomic_DNA"/>
</dbReference>
<dbReference type="RefSeq" id="NP_050969.1">
    <property type="nucleotide sequence ID" value="NC_000935.1"/>
</dbReference>
<dbReference type="KEGG" id="vg:1262302"/>
<dbReference type="Proteomes" id="UP000000853">
    <property type="component" value="Genome"/>
</dbReference>
<feature type="chain" id="PRO_0000077853" description="Putative protein p8">
    <location>
        <begin position="1"/>
        <end position="87"/>
    </location>
</feature>
<reference key="1">
    <citation type="journal article" date="1999" name="Virology">
        <title>Isolation and characterization of APSE-1, a bacteriophage infecting the secondary endosymbiont of acyrthosiphon pisum.</title>
        <authorList>
            <person name="van der Wilk F."/>
            <person name="Dullemans A.M."/>
            <person name="Verbeek M."/>
            <person name="van den Heuvel J.F.J.M."/>
        </authorList>
    </citation>
    <scope>NUCLEOTIDE SEQUENCE [LARGE SCALE GENOMIC DNA]</scope>
</reference>
<accession>Q9T1U0</accession>
<proteinExistence type="predicted"/>
<name>VP08_BPAPS</name>
<gene>
    <name type="primary">8</name>
</gene>
<keyword id="KW-1185">Reference proteome</keyword>
<organism>
    <name type="scientific">Acyrthosiphon pisum secondary endosymbiont phage 1</name>
    <name type="common">Bacteriophage APSE-1</name>
    <dbReference type="NCBI Taxonomy" id="2682836"/>
    <lineage>
        <taxon>Viruses</taxon>
        <taxon>Duplodnaviria</taxon>
        <taxon>Heunggongvirae</taxon>
        <taxon>Uroviricota</taxon>
        <taxon>Caudoviricetes</taxon>
        <taxon>Sendosyvirus</taxon>
        <taxon>Sendosyvirus APSE1</taxon>
    </lineage>
</organism>
<protein>
    <recommendedName>
        <fullName>Putative protein p8</fullName>
    </recommendedName>
</protein>
<sequence>MRNIMKHGMSKYLFTIFFLFSNSYAFAACQDCVTISGQWVNLSEVGIVVGDYHYGVTKDNKKFLLTDGSVNKAEKALILGTKLYVDT</sequence>
<organismHost>
    <name type="scientific">Escherichia coli</name>
    <dbReference type="NCBI Taxonomy" id="562"/>
</organismHost>